<organism>
    <name type="scientific">Saccharophagus degradans (strain 2-40 / ATCC 43961 / DSM 17024)</name>
    <dbReference type="NCBI Taxonomy" id="203122"/>
    <lineage>
        <taxon>Bacteria</taxon>
        <taxon>Pseudomonadati</taxon>
        <taxon>Pseudomonadota</taxon>
        <taxon>Gammaproteobacteria</taxon>
        <taxon>Cellvibrionales</taxon>
        <taxon>Cellvibrionaceae</taxon>
        <taxon>Saccharophagus</taxon>
    </lineage>
</organism>
<dbReference type="EMBL" id="CP000282">
    <property type="protein sequence ID" value="ABD80559.1"/>
    <property type="molecule type" value="Genomic_DNA"/>
</dbReference>
<dbReference type="RefSeq" id="WP_011467779.1">
    <property type="nucleotide sequence ID" value="NC_007912.1"/>
</dbReference>
<dbReference type="SMR" id="Q21L70"/>
<dbReference type="STRING" id="203122.Sde_1297"/>
<dbReference type="GeneID" id="98612972"/>
<dbReference type="KEGG" id="sde:Sde_1297"/>
<dbReference type="eggNOG" id="COG2835">
    <property type="taxonomic scope" value="Bacteria"/>
</dbReference>
<dbReference type="HOGENOM" id="CLU_155659_3_1_6"/>
<dbReference type="OrthoDB" id="9812205at2"/>
<dbReference type="Proteomes" id="UP000001947">
    <property type="component" value="Chromosome"/>
</dbReference>
<dbReference type="GO" id="GO:0005829">
    <property type="term" value="C:cytosol"/>
    <property type="evidence" value="ECO:0007669"/>
    <property type="project" value="TreeGrafter"/>
</dbReference>
<dbReference type="FunFam" id="2.20.25.10:FF:000002">
    <property type="entry name" value="UPF0434 protein YcaR"/>
    <property type="match status" value="1"/>
</dbReference>
<dbReference type="Gene3D" id="2.20.25.10">
    <property type="match status" value="1"/>
</dbReference>
<dbReference type="HAMAP" id="MF_01187">
    <property type="entry name" value="UPF0434"/>
    <property type="match status" value="1"/>
</dbReference>
<dbReference type="InterPro" id="IPR005651">
    <property type="entry name" value="Trm112-like"/>
</dbReference>
<dbReference type="PANTHER" id="PTHR33505:SF4">
    <property type="entry name" value="PROTEIN PREY, MITOCHONDRIAL"/>
    <property type="match status" value="1"/>
</dbReference>
<dbReference type="PANTHER" id="PTHR33505">
    <property type="entry name" value="ZGC:162634"/>
    <property type="match status" value="1"/>
</dbReference>
<dbReference type="Pfam" id="PF03966">
    <property type="entry name" value="Trm112p"/>
    <property type="match status" value="1"/>
</dbReference>
<dbReference type="SUPFAM" id="SSF158997">
    <property type="entry name" value="Trm112p-like"/>
    <property type="match status" value="1"/>
</dbReference>
<protein>
    <recommendedName>
        <fullName evidence="1">UPF0434 protein Sde_1297</fullName>
    </recommendedName>
</protein>
<reference key="1">
    <citation type="journal article" date="2008" name="PLoS Genet.">
        <title>Complete genome sequence of the complex carbohydrate-degrading marine bacterium, Saccharophagus degradans strain 2-40 T.</title>
        <authorList>
            <person name="Weiner R.M."/>
            <person name="Taylor L.E. II"/>
            <person name="Henrissat B."/>
            <person name="Hauser L."/>
            <person name="Land M."/>
            <person name="Coutinho P.M."/>
            <person name="Rancurel C."/>
            <person name="Saunders E.H."/>
            <person name="Longmire A.G."/>
            <person name="Zhang H."/>
            <person name="Bayer E.A."/>
            <person name="Gilbert H.J."/>
            <person name="Larimer F."/>
            <person name="Zhulin I.B."/>
            <person name="Ekborg N.A."/>
            <person name="Lamed R."/>
            <person name="Richardson P.M."/>
            <person name="Borovok I."/>
            <person name="Hutcheson S."/>
        </authorList>
    </citation>
    <scope>NUCLEOTIDE SEQUENCE [LARGE SCALE GENOMIC DNA]</scope>
    <source>
        <strain>2-40 / ATCC 43961 / DSM 17024</strain>
    </source>
</reference>
<feature type="chain" id="PRO_0000291157" description="UPF0434 protein Sde_1297">
    <location>
        <begin position="1"/>
        <end position="63"/>
    </location>
</feature>
<comment type="similarity">
    <text evidence="1">Belongs to the UPF0434 family.</text>
</comment>
<proteinExistence type="inferred from homology"/>
<sequence length="63" mass="7019">MLDQKLLSLLVCPVTKAPLIYDEPKQELVCVASGLAYPIRDGIPVMLEGEARVLSQEEKESYK</sequence>
<evidence type="ECO:0000255" key="1">
    <source>
        <dbReference type="HAMAP-Rule" id="MF_01187"/>
    </source>
</evidence>
<gene>
    <name type="ordered locus">Sde_1297</name>
</gene>
<name>Y1297_SACD2</name>
<keyword id="KW-1185">Reference proteome</keyword>
<accession>Q21L70</accession>